<sequence>MDKILEGLVSSSHPLPLKRMIVRKVVEFAEHWLDEAQCEAMFDLTTRLILEGQDPFQRQVGHQVLEAYARYHRPEFESFFNKTFVLGLLQQGYHSVDRKDVAILDYIHNGLKLIMSCPSVLDLFSLLQVEVLRMVCERPEPVLCARLSDLLTDFVQCVPKGKLSVTFCQQLVRTIGHFQCVSTQEKELREYVSQVTKVSTLLQNIWKAEPSTLLPSLQEVFASISSTDASFEPSVALASLVQHIPLQMITVLIRSLTTDPNVKDASMTQALCRMIDWLSWPLAQHVDTWVIALLKGLAAVQKFTILIDVTLLKIELVFNRLWFPLVRPGALAVLSHMLLSFQHSPEAFHVIVPHIVNLVHSFRSDGLPSSTAFLVQLTELVHCMMYHYSGFPDLYEPILEAVKDFPKPSEEKIKLILNQSAWTSQSNALASCLSRLSGKSETGKTGLINLGNTCYMNSVLQALFMATEFRRQVLSLNLNGCNSLMKKLQHLFAFLAHTQREAYAPRIFFEASRPPWFTPRSQQDCSEYLRFLLDRLHEEEKILRVQSSHKPSEGLDCAETCLQEVTSKVAVPTESPGTGDSEKTLIEKMFGGKLRTHICCLNCGSTSHKVEAFTDLSLAFCPSPSVEDLSFQDTASLPSAQDDGLMQTSVADPEEEPVVYNPATAAFVCDSVVNQRVLGSPPVEFHCAESSSVPEESAKILISKDVPQNPGGESTTSVTDLLNYFLAPEVLTGENQYYCESCASLQNAEKTMQITEEPEYLILTLLRFSYDQKYHVRRKILDNVSLPLVLELPVKRTASFSSLSQSWSVDVDFTDINENLPKKLKPSGTEEAFCPKLVPYLLSSVVVHSGVSSESGHYYSYARNITGTESSYQMCPQSESLALAPSQSCLLGVESPNTVIEQDLENKEMSQEWFLFNDSRVTFTSFQSVQKITSRFPKDTAYVLLYKKQSRANGIDSDNPASGVWANGDPPLQKELMDAITKDNKLYLQEQELNARARALQAASASCSFRPNGFDDNDPPGSCGPTGGGGGGGFNTVGRLVF</sequence>
<name>UBP38_MOUSE</name>
<evidence type="ECO:0000250" key="1">
    <source>
        <dbReference type="UniProtKB" id="Q8NB14"/>
    </source>
</evidence>
<evidence type="ECO:0000255" key="2">
    <source>
        <dbReference type="PROSITE-ProRule" id="PRU10092"/>
    </source>
</evidence>
<evidence type="ECO:0000255" key="3">
    <source>
        <dbReference type="PROSITE-ProRule" id="PRU10093"/>
    </source>
</evidence>
<evidence type="ECO:0000269" key="4">
    <source>
    </source>
</evidence>
<evidence type="ECO:0000269" key="5">
    <source>
    </source>
</evidence>
<evidence type="ECO:0000305" key="6"/>
<reference key="1">
    <citation type="journal article" date="2005" name="Science">
        <title>The transcriptional landscape of the mammalian genome.</title>
        <authorList>
            <person name="Carninci P."/>
            <person name="Kasukawa T."/>
            <person name="Katayama S."/>
            <person name="Gough J."/>
            <person name="Frith M.C."/>
            <person name="Maeda N."/>
            <person name="Oyama R."/>
            <person name="Ravasi T."/>
            <person name="Lenhard B."/>
            <person name="Wells C."/>
            <person name="Kodzius R."/>
            <person name="Shimokawa K."/>
            <person name="Bajic V.B."/>
            <person name="Brenner S.E."/>
            <person name="Batalov S."/>
            <person name="Forrest A.R."/>
            <person name="Zavolan M."/>
            <person name="Davis M.J."/>
            <person name="Wilming L.G."/>
            <person name="Aidinis V."/>
            <person name="Allen J.E."/>
            <person name="Ambesi-Impiombato A."/>
            <person name="Apweiler R."/>
            <person name="Aturaliya R.N."/>
            <person name="Bailey T.L."/>
            <person name="Bansal M."/>
            <person name="Baxter L."/>
            <person name="Beisel K.W."/>
            <person name="Bersano T."/>
            <person name="Bono H."/>
            <person name="Chalk A.M."/>
            <person name="Chiu K.P."/>
            <person name="Choudhary V."/>
            <person name="Christoffels A."/>
            <person name="Clutterbuck D.R."/>
            <person name="Crowe M.L."/>
            <person name="Dalla E."/>
            <person name="Dalrymple B.P."/>
            <person name="de Bono B."/>
            <person name="Della Gatta G."/>
            <person name="di Bernardo D."/>
            <person name="Down T."/>
            <person name="Engstrom P."/>
            <person name="Fagiolini M."/>
            <person name="Faulkner G."/>
            <person name="Fletcher C.F."/>
            <person name="Fukushima T."/>
            <person name="Furuno M."/>
            <person name="Futaki S."/>
            <person name="Gariboldi M."/>
            <person name="Georgii-Hemming P."/>
            <person name="Gingeras T.R."/>
            <person name="Gojobori T."/>
            <person name="Green R.E."/>
            <person name="Gustincich S."/>
            <person name="Harbers M."/>
            <person name="Hayashi Y."/>
            <person name="Hensch T.K."/>
            <person name="Hirokawa N."/>
            <person name="Hill D."/>
            <person name="Huminiecki L."/>
            <person name="Iacono M."/>
            <person name="Ikeo K."/>
            <person name="Iwama A."/>
            <person name="Ishikawa T."/>
            <person name="Jakt M."/>
            <person name="Kanapin A."/>
            <person name="Katoh M."/>
            <person name="Kawasawa Y."/>
            <person name="Kelso J."/>
            <person name="Kitamura H."/>
            <person name="Kitano H."/>
            <person name="Kollias G."/>
            <person name="Krishnan S.P."/>
            <person name="Kruger A."/>
            <person name="Kummerfeld S.K."/>
            <person name="Kurochkin I.V."/>
            <person name="Lareau L.F."/>
            <person name="Lazarevic D."/>
            <person name="Lipovich L."/>
            <person name="Liu J."/>
            <person name="Liuni S."/>
            <person name="McWilliam S."/>
            <person name="Madan Babu M."/>
            <person name="Madera M."/>
            <person name="Marchionni L."/>
            <person name="Matsuda H."/>
            <person name="Matsuzawa S."/>
            <person name="Miki H."/>
            <person name="Mignone F."/>
            <person name="Miyake S."/>
            <person name="Morris K."/>
            <person name="Mottagui-Tabar S."/>
            <person name="Mulder N."/>
            <person name="Nakano N."/>
            <person name="Nakauchi H."/>
            <person name="Ng P."/>
            <person name="Nilsson R."/>
            <person name="Nishiguchi S."/>
            <person name="Nishikawa S."/>
            <person name="Nori F."/>
            <person name="Ohara O."/>
            <person name="Okazaki Y."/>
            <person name="Orlando V."/>
            <person name="Pang K.C."/>
            <person name="Pavan W.J."/>
            <person name="Pavesi G."/>
            <person name="Pesole G."/>
            <person name="Petrovsky N."/>
            <person name="Piazza S."/>
            <person name="Reed J."/>
            <person name="Reid J.F."/>
            <person name="Ring B.Z."/>
            <person name="Ringwald M."/>
            <person name="Rost B."/>
            <person name="Ruan Y."/>
            <person name="Salzberg S.L."/>
            <person name="Sandelin A."/>
            <person name="Schneider C."/>
            <person name="Schoenbach C."/>
            <person name="Sekiguchi K."/>
            <person name="Semple C.A."/>
            <person name="Seno S."/>
            <person name="Sessa L."/>
            <person name="Sheng Y."/>
            <person name="Shibata Y."/>
            <person name="Shimada H."/>
            <person name="Shimada K."/>
            <person name="Silva D."/>
            <person name="Sinclair B."/>
            <person name="Sperling S."/>
            <person name="Stupka E."/>
            <person name="Sugiura K."/>
            <person name="Sultana R."/>
            <person name="Takenaka Y."/>
            <person name="Taki K."/>
            <person name="Tammoja K."/>
            <person name="Tan S.L."/>
            <person name="Tang S."/>
            <person name="Taylor M.S."/>
            <person name="Tegner J."/>
            <person name="Teichmann S.A."/>
            <person name="Ueda H.R."/>
            <person name="van Nimwegen E."/>
            <person name="Verardo R."/>
            <person name="Wei C.L."/>
            <person name="Yagi K."/>
            <person name="Yamanishi H."/>
            <person name="Zabarovsky E."/>
            <person name="Zhu S."/>
            <person name="Zimmer A."/>
            <person name="Hide W."/>
            <person name="Bult C."/>
            <person name="Grimmond S.M."/>
            <person name="Teasdale R.D."/>
            <person name="Liu E.T."/>
            <person name="Brusic V."/>
            <person name="Quackenbush J."/>
            <person name="Wahlestedt C."/>
            <person name="Mattick J.S."/>
            <person name="Hume D.A."/>
            <person name="Kai C."/>
            <person name="Sasaki D."/>
            <person name="Tomaru Y."/>
            <person name="Fukuda S."/>
            <person name="Kanamori-Katayama M."/>
            <person name="Suzuki M."/>
            <person name="Aoki J."/>
            <person name="Arakawa T."/>
            <person name="Iida J."/>
            <person name="Imamura K."/>
            <person name="Itoh M."/>
            <person name="Kato T."/>
            <person name="Kawaji H."/>
            <person name="Kawagashira N."/>
            <person name="Kawashima T."/>
            <person name="Kojima M."/>
            <person name="Kondo S."/>
            <person name="Konno H."/>
            <person name="Nakano K."/>
            <person name="Ninomiya N."/>
            <person name="Nishio T."/>
            <person name="Okada M."/>
            <person name="Plessy C."/>
            <person name="Shibata K."/>
            <person name="Shiraki T."/>
            <person name="Suzuki S."/>
            <person name="Tagami M."/>
            <person name="Waki K."/>
            <person name="Watahiki A."/>
            <person name="Okamura-Oho Y."/>
            <person name="Suzuki H."/>
            <person name="Kawai J."/>
            <person name="Hayashizaki Y."/>
        </authorList>
    </citation>
    <scope>NUCLEOTIDE SEQUENCE [LARGE SCALE MRNA]</scope>
    <source>
        <strain>C57BL/6J</strain>
        <tissue>Embryonic heart</tissue>
        <tissue>Embryonic stem cell</tissue>
        <tissue>Oviduct</tissue>
    </source>
</reference>
<reference key="2">
    <citation type="journal article" date="2004" name="Genome Res.">
        <title>The status, quality, and expansion of the NIH full-length cDNA project: the Mammalian Gene Collection (MGC).</title>
        <authorList>
            <consortium name="The MGC Project Team"/>
        </authorList>
    </citation>
    <scope>NUCLEOTIDE SEQUENCE [LARGE SCALE MRNA]</scope>
    <source>
        <strain>C57BL/6J</strain>
        <tissue>Brain</tissue>
        <tissue>Olfactory epithelium</tissue>
        <tissue>Retina</tissue>
    </source>
</reference>
<reference key="3">
    <citation type="journal article" date="2010" name="Cell">
        <title>A tissue-specific atlas of mouse protein phosphorylation and expression.</title>
        <authorList>
            <person name="Huttlin E.L."/>
            <person name="Jedrychowski M.P."/>
            <person name="Elias J.E."/>
            <person name="Goswami T."/>
            <person name="Rad R."/>
            <person name="Beausoleil S.A."/>
            <person name="Villen J."/>
            <person name="Haas W."/>
            <person name="Sowa M.E."/>
            <person name="Gygi S.P."/>
        </authorList>
    </citation>
    <scope>IDENTIFICATION BY MASS SPECTROMETRY [LARGE SCALE ANALYSIS]</scope>
    <source>
        <tissue>Heart</tissue>
        <tissue>Liver</tissue>
        <tissue>Pancreas</tissue>
        <tissue>Testis</tissue>
    </source>
</reference>
<reference key="4">
    <citation type="journal article" date="2016" name="Mol. Cell">
        <title>USP38 Inhibits Type I Interferon Signaling by Editing TBK1 Ubiquitination through NLRP4 Signalosome.</title>
        <authorList>
            <person name="Lin M."/>
            <person name="Zhao Z."/>
            <person name="Yang Z."/>
            <person name="Meng Q."/>
            <person name="Tan P."/>
            <person name="Xie W."/>
            <person name="Qin Y."/>
            <person name="Wang R.F."/>
            <person name="Cui J."/>
        </authorList>
    </citation>
    <scope>FUNCTION</scope>
    <scope>DISRUPTION PHENOTYPE</scope>
</reference>
<reference key="5">
    <citation type="journal article" date="2022" name="Proc. Natl. Acad. Sci. U.S.A.">
        <title>Reciprocal regulation of IL-33 receptor-mediated inflammatory response and pulmonary fibrosis by TRAF6 and USP38.</title>
        <authorList>
            <person name="Yi X.M."/>
            <person name="Li M."/>
            <person name="Chen Y.D."/>
            <person name="Shu H.B."/>
            <person name="Li S."/>
        </authorList>
    </citation>
    <scope>FUNCTION</scope>
    <scope>DISRUPTION PHENOTYPE</scope>
</reference>
<proteinExistence type="evidence at protein level"/>
<comment type="function">
    <text evidence="1 4 5">Deubiquitinating enzyme that plays a role in various cellular processes, including DNA repair, cell cycle regulation, and immune response (PubMed:27692986, PubMed:35238669). Plays a role in the inhibition of type I interferon signaling by mediating the 'Lys-33' to 'Lys-48' ubiquitination transition of TBK1 leading to its degradation. Cleaves the ubiquitin chain from the histone demethylase LSD1/KDM1A and prevents it from degradation by the 26S proteasome, thus maintaining LSD1 protein level in cells. Plays a role in the DNA damage response by regulating the deacetylase activity of HDAC1. Mechanistically, removes the 'Lys-63'-linked ubiquitin chain promoting the deacetylase activity of HDAC1 in response to DNA damage. Also acts as a specific deubiquitinase of histone deacetylase 3/HDAC3 and cleaves its 'Lys-63'-linked ubiquitin chains to lower its histone deacetylase activity. Regulates MYC levels and cell proliferation via antagonizing ubiquitin E3 ligase FBXW7 thereby preventing MYC 'Lys-48'-linked ubiquitination and degradation. Participates in antiviral response by removing both 'Lys-48'-linked and 'Lys-63'-linked polyubiquitination of Zika virus envelope protein E. Constitutively associated with IL-33R/IL1RL1, deconjugates its 'Lys-27'-linked polyubiquitination resulting in its autophagic degradation.</text>
</comment>
<comment type="catalytic activity">
    <reaction evidence="1">
        <text>Thiol-dependent hydrolysis of ester, thioester, amide, peptide and isopeptide bonds formed by the C-terminal Gly of ubiquitin (a 76-residue protein attached to proteins as an intracellular targeting signal).</text>
        <dbReference type="EC" id="3.4.19.12"/>
    </reaction>
</comment>
<comment type="subunit">
    <text evidence="1">Interacts with isoform 1 of FBXW7; this interaction prevents FBXW7-mediated degradation of MYC.</text>
</comment>
<comment type="subcellular location">
    <subcellularLocation>
        <location evidence="1">Cytoplasm</location>
    </subcellularLocation>
    <subcellularLocation>
        <location evidence="1">Nucleus</location>
    </subcellularLocation>
    <text evidence="1">In response to DNA damage, recruited to DNA damage sites in the nucleus.</text>
</comment>
<comment type="disruption phenotype">
    <text evidence="4 5">USP38-deletion mice produce higher levels of IFN-beta, TNF-alpha, and IL-6 than WT mice in response to viral infection (PubMed:27692986). They are also more susceptible to inflammatory damage and death and developed more serious pulmonary fibrosis after bleomycin treatment (PubMed:35238669).</text>
</comment>
<comment type="similarity">
    <text evidence="6">Belongs to the peptidase C19 family.</text>
</comment>
<dbReference type="EC" id="3.4.19.12"/>
<dbReference type="EMBL" id="AK049287">
    <property type="protein sequence ID" value="BAC33659.2"/>
    <property type="molecule type" value="mRNA"/>
</dbReference>
<dbReference type="EMBL" id="AK052219">
    <property type="protein sequence ID" value="BAC34890.1"/>
    <property type="molecule type" value="mRNA"/>
</dbReference>
<dbReference type="EMBL" id="AK054116">
    <property type="protein sequence ID" value="BAC35661.1"/>
    <property type="molecule type" value="mRNA"/>
</dbReference>
<dbReference type="EMBL" id="BC054404">
    <property type="protein sequence ID" value="AAH54404.1"/>
    <property type="molecule type" value="mRNA"/>
</dbReference>
<dbReference type="EMBL" id="BC057122">
    <property type="protein sequence ID" value="AAH57122.1"/>
    <property type="molecule type" value="mRNA"/>
</dbReference>
<dbReference type="EMBL" id="BC058784">
    <property type="protein sequence ID" value="AAH58784.1"/>
    <property type="molecule type" value="mRNA"/>
</dbReference>
<dbReference type="CCDS" id="CCDS22444.1"/>
<dbReference type="RefSeq" id="NP_081830.2">
    <property type="nucleotide sequence ID" value="NM_027554.2"/>
</dbReference>
<dbReference type="SMR" id="Q8BW70"/>
<dbReference type="BioGRID" id="217020">
    <property type="interactions" value="3"/>
</dbReference>
<dbReference type="FunCoup" id="Q8BW70">
    <property type="interactions" value="4044"/>
</dbReference>
<dbReference type="STRING" id="10090.ENSMUSP00000039943"/>
<dbReference type="MEROPS" id="C19.056"/>
<dbReference type="GlyGen" id="Q8BW70">
    <property type="glycosylation" value="2 sites, 1 N-linked glycan (1 site)"/>
</dbReference>
<dbReference type="iPTMnet" id="Q8BW70"/>
<dbReference type="PhosphoSitePlus" id="Q8BW70"/>
<dbReference type="PaxDb" id="10090-ENSMUSP00000039943"/>
<dbReference type="ProteomicsDB" id="298461"/>
<dbReference type="Pumba" id="Q8BW70"/>
<dbReference type="Antibodypedia" id="27336">
    <property type="antibodies" value="137 antibodies from 26 providers"/>
</dbReference>
<dbReference type="DNASU" id="74841"/>
<dbReference type="Ensembl" id="ENSMUST00000042724.8">
    <property type="protein sequence ID" value="ENSMUSP00000039943.7"/>
    <property type="gene ID" value="ENSMUSG00000038250.10"/>
</dbReference>
<dbReference type="GeneID" id="74841"/>
<dbReference type="KEGG" id="mmu:74841"/>
<dbReference type="UCSC" id="uc009mjd.1">
    <property type="organism name" value="mouse"/>
</dbReference>
<dbReference type="AGR" id="MGI:1922091"/>
<dbReference type="CTD" id="84640"/>
<dbReference type="MGI" id="MGI:1922091">
    <property type="gene designation" value="Usp38"/>
</dbReference>
<dbReference type="VEuPathDB" id="HostDB:ENSMUSG00000038250"/>
<dbReference type="eggNOG" id="KOG1864">
    <property type="taxonomic scope" value="Eukaryota"/>
</dbReference>
<dbReference type="GeneTree" id="ENSGT00940000158403"/>
<dbReference type="HOGENOM" id="CLU_010910_0_0_1"/>
<dbReference type="InParanoid" id="Q8BW70"/>
<dbReference type="OMA" id="AFVCDSV"/>
<dbReference type="OrthoDB" id="2420415at2759"/>
<dbReference type="PhylomeDB" id="Q8BW70"/>
<dbReference type="TreeFam" id="TF324529"/>
<dbReference type="BioGRID-ORCS" id="74841">
    <property type="hits" value="5 hits in 77 CRISPR screens"/>
</dbReference>
<dbReference type="ChiTaRS" id="Usp38">
    <property type="organism name" value="mouse"/>
</dbReference>
<dbReference type="PRO" id="PR:Q8BW70"/>
<dbReference type="Proteomes" id="UP000000589">
    <property type="component" value="Chromosome 8"/>
</dbReference>
<dbReference type="RNAct" id="Q8BW70">
    <property type="molecule type" value="protein"/>
</dbReference>
<dbReference type="Bgee" id="ENSMUSG00000038250">
    <property type="expression patterns" value="Expressed in animal zygote and 241 other cell types or tissues"/>
</dbReference>
<dbReference type="GO" id="GO:0005737">
    <property type="term" value="C:cytoplasm"/>
    <property type="evidence" value="ECO:0007669"/>
    <property type="project" value="UniProtKB-SubCell"/>
</dbReference>
<dbReference type="GO" id="GO:0005634">
    <property type="term" value="C:nucleus"/>
    <property type="evidence" value="ECO:0007669"/>
    <property type="project" value="UniProtKB-SubCell"/>
</dbReference>
<dbReference type="GO" id="GO:0004843">
    <property type="term" value="F:cysteine-type deubiquitinase activity"/>
    <property type="evidence" value="ECO:0007669"/>
    <property type="project" value="UniProtKB-EC"/>
</dbReference>
<dbReference type="GO" id="GO:0140311">
    <property type="term" value="F:protein sequestering activity"/>
    <property type="evidence" value="ECO:0007669"/>
    <property type="project" value="Ensembl"/>
</dbReference>
<dbReference type="GO" id="GO:0045824">
    <property type="term" value="P:negative regulation of innate immune response"/>
    <property type="evidence" value="ECO:0007669"/>
    <property type="project" value="Ensembl"/>
</dbReference>
<dbReference type="GO" id="GO:0032435">
    <property type="term" value="P:negative regulation of proteasomal ubiquitin-dependent protein catabolic process"/>
    <property type="evidence" value="ECO:0007669"/>
    <property type="project" value="Ensembl"/>
</dbReference>
<dbReference type="GO" id="GO:1990168">
    <property type="term" value="P:protein K33-linked deubiquitination"/>
    <property type="evidence" value="ECO:0007669"/>
    <property type="project" value="Ensembl"/>
</dbReference>
<dbReference type="GO" id="GO:0006511">
    <property type="term" value="P:ubiquitin-dependent protein catabolic process"/>
    <property type="evidence" value="ECO:0007669"/>
    <property type="project" value="InterPro"/>
</dbReference>
<dbReference type="CDD" id="cd02664">
    <property type="entry name" value="Peptidase_C19H"/>
    <property type="match status" value="1"/>
</dbReference>
<dbReference type="Gene3D" id="3.90.70.10">
    <property type="entry name" value="Cysteine proteinases"/>
    <property type="match status" value="1"/>
</dbReference>
<dbReference type="InterPro" id="IPR038765">
    <property type="entry name" value="Papain-like_cys_pep_sf"/>
</dbReference>
<dbReference type="InterPro" id="IPR050164">
    <property type="entry name" value="Peptidase_C19"/>
</dbReference>
<dbReference type="InterPro" id="IPR001394">
    <property type="entry name" value="Peptidase_C19_UCH"/>
</dbReference>
<dbReference type="InterPro" id="IPR033840">
    <property type="entry name" value="USP38"/>
</dbReference>
<dbReference type="InterPro" id="IPR049407">
    <property type="entry name" value="Usp38-like_N"/>
</dbReference>
<dbReference type="InterPro" id="IPR018200">
    <property type="entry name" value="USP_CS"/>
</dbReference>
<dbReference type="InterPro" id="IPR028889">
    <property type="entry name" value="USP_dom"/>
</dbReference>
<dbReference type="PANTHER" id="PTHR24006">
    <property type="entry name" value="UBIQUITIN CARBOXYL-TERMINAL HYDROLASE"/>
    <property type="match status" value="1"/>
</dbReference>
<dbReference type="PANTHER" id="PTHR24006:SF710">
    <property type="entry name" value="UBIQUITIN CARBOXYL-TERMINAL HYDROLASE 38"/>
    <property type="match status" value="1"/>
</dbReference>
<dbReference type="Pfam" id="PF00443">
    <property type="entry name" value="UCH"/>
    <property type="match status" value="1"/>
</dbReference>
<dbReference type="Pfam" id="PF21246">
    <property type="entry name" value="Usp38-like_N"/>
    <property type="match status" value="1"/>
</dbReference>
<dbReference type="SUPFAM" id="SSF54001">
    <property type="entry name" value="Cysteine proteinases"/>
    <property type="match status" value="1"/>
</dbReference>
<dbReference type="PROSITE" id="PS00972">
    <property type="entry name" value="USP_1"/>
    <property type="match status" value="1"/>
</dbReference>
<dbReference type="PROSITE" id="PS00973">
    <property type="entry name" value="USP_2"/>
    <property type="match status" value="1"/>
</dbReference>
<dbReference type="PROSITE" id="PS50235">
    <property type="entry name" value="USP_3"/>
    <property type="match status" value="1"/>
</dbReference>
<feature type="chain" id="PRO_0000080669" description="Ubiquitin carboxyl-terminal hydrolase 38">
    <location>
        <begin position="1"/>
        <end position="1042"/>
    </location>
</feature>
<feature type="domain" description="USP">
    <location>
        <begin position="445"/>
        <end position="949"/>
    </location>
</feature>
<feature type="active site" description="Nucleophile" evidence="2 3">
    <location>
        <position position="454"/>
    </location>
</feature>
<feature type="active site" description="Proton acceptor" evidence="2 3">
    <location>
        <position position="857"/>
    </location>
</feature>
<feature type="sequence conflict" description="In Ref. 1; BAC35661." evidence="6" ref="1">
    <original>Q</original>
    <variation>H</variation>
    <location>
        <position position="90"/>
    </location>
</feature>
<feature type="sequence conflict" description="In Ref. 1; BAC33659." evidence="6" ref="1">
    <original>S</original>
    <variation>G</variation>
    <location>
        <position position="266"/>
    </location>
</feature>
<feature type="sequence conflict" description="In Ref. 1; BAC34890." evidence="6" ref="1">
    <original>T</original>
    <variation>A</variation>
    <location>
        <position position="442"/>
    </location>
</feature>
<feature type="sequence conflict" description="In Ref. 1; BAC33659." evidence="6" ref="1">
    <original>V</original>
    <variation>A</variation>
    <location>
        <position position="776"/>
    </location>
</feature>
<protein>
    <recommendedName>
        <fullName>Ubiquitin carboxyl-terminal hydrolase 38</fullName>
        <ecNumber>3.4.19.12</ecNumber>
    </recommendedName>
    <alternativeName>
        <fullName>Deubiquitinating enzyme 38</fullName>
    </alternativeName>
    <alternativeName>
        <fullName>Ubiquitin thioesterase 38</fullName>
    </alternativeName>
    <alternativeName>
        <fullName>Ubiquitin-specific-processing protease 38</fullName>
    </alternativeName>
</protein>
<accession>Q8BW70</accession>
<accession>Q8BWL1</accession>
<accession>Q8BX03</accession>
<keyword id="KW-0963">Cytoplasm</keyword>
<keyword id="KW-0378">Hydrolase</keyword>
<keyword id="KW-0539">Nucleus</keyword>
<keyword id="KW-0645">Protease</keyword>
<keyword id="KW-1185">Reference proteome</keyword>
<keyword id="KW-0788">Thiol protease</keyword>
<keyword id="KW-0833">Ubl conjugation pathway</keyword>
<gene>
    <name type="primary">Usp38</name>
</gene>
<organism>
    <name type="scientific">Mus musculus</name>
    <name type="common">Mouse</name>
    <dbReference type="NCBI Taxonomy" id="10090"/>
    <lineage>
        <taxon>Eukaryota</taxon>
        <taxon>Metazoa</taxon>
        <taxon>Chordata</taxon>
        <taxon>Craniata</taxon>
        <taxon>Vertebrata</taxon>
        <taxon>Euteleostomi</taxon>
        <taxon>Mammalia</taxon>
        <taxon>Eutheria</taxon>
        <taxon>Euarchontoglires</taxon>
        <taxon>Glires</taxon>
        <taxon>Rodentia</taxon>
        <taxon>Myomorpha</taxon>
        <taxon>Muroidea</taxon>
        <taxon>Muridae</taxon>
        <taxon>Murinae</taxon>
        <taxon>Mus</taxon>
        <taxon>Mus</taxon>
    </lineage>
</organism>